<proteinExistence type="inferred from homology"/>
<keyword id="KW-0091">Biomineralization</keyword>
<keyword id="KW-1281">Magnetosome</keyword>
<keyword id="KW-0472">Membrane</keyword>
<keyword id="KW-0812">Transmembrane</keyword>
<keyword id="KW-1133">Transmembrane helix</keyword>
<dbReference type="EMBL" id="AP007255">
    <property type="protein sequence ID" value="BAE49757.1"/>
    <property type="molecule type" value="Genomic_DNA"/>
</dbReference>
<dbReference type="RefSeq" id="WP_008620747.1">
    <property type="nucleotide sequence ID" value="NC_007626.1"/>
</dbReference>
<dbReference type="STRING" id="342108.amb0953"/>
<dbReference type="KEGG" id="mag:amb0953"/>
<dbReference type="HOGENOM" id="CLU_095018_0_1_5"/>
<dbReference type="OrthoDB" id="7357340at2"/>
<dbReference type="Proteomes" id="UP000007058">
    <property type="component" value="Chromosome"/>
</dbReference>
<dbReference type="GO" id="GO:0110146">
    <property type="term" value="C:magnetosome membrane"/>
    <property type="evidence" value="ECO:0000314"/>
    <property type="project" value="UniProtKB"/>
</dbReference>
<organism>
    <name type="scientific">Paramagnetospirillum magneticum (strain ATCC 700264 / AMB-1)</name>
    <name type="common">Magnetospirillum magneticum</name>
    <dbReference type="NCBI Taxonomy" id="342108"/>
    <lineage>
        <taxon>Bacteria</taxon>
        <taxon>Pseudomonadati</taxon>
        <taxon>Pseudomonadota</taxon>
        <taxon>Alphaproteobacteria</taxon>
        <taxon>Rhodospirillales</taxon>
        <taxon>Magnetospirillaceae</taxon>
        <taxon>Paramagnetospirillum</taxon>
    </lineage>
</organism>
<comment type="function">
    <text evidence="1">Plays a role in regulating magnetite crystal size; partially redundant function with MmsF.</text>
</comment>
<comment type="subcellular location">
    <subcellularLocation>
        <location evidence="3">Magnetosome membrane</location>
        <topology evidence="2">Multi-pass membrane protein</topology>
    </subcellularLocation>
    <text evidence="3">Tagged protein forms straight lines extending along most of the cell associated with its inner curvature, in the correct position to be filaments that are seen associated with magnetosomes. In a mamE disruption MamF mislocalizes as a linear punctate pattern.</text>
</comment>
<comment type="PTM">
    <text evidence="1">Probably subject to cleavage or degradation.</text>
</comment>
<comment type="disruption phenotype">
    <text evidence="4">Deletion of the probable mamGFDC operon leads to a slight reduction in magnetic response and slightly narrower magnetite crystals.</text>
</comment>
<comment type="miscellaneous">
    <text evidence="5">This bacteria makes up to 20 cubo-octahedral magnetosomes of about 45 nm in diameter which contain membrane-bound crystals of magnetite (Fe(3)O(4)).</text>
</comment>
<comment type="similarity">
    <text evidence="5">Belongs to the magnetosome MamF/MmsF protein family.</text>
</comment>
<gene>
    <name type="primary">mamF</name>
    <name type="ordered locus">amb0953</name>
</gene>
<sequence length="111" mass="12405">MAEAILLETENTPCGCRSYLMAGLSYLGILCFVPLLMSRDDEYVYFHAKQGLVLWMWSVLAMFALHLPLIGKWLFGFSSMGVLVLSVAGLASVALRRTWRLPLVGYFVALI</sequence>
<protein>
    <recommendedName>
        <fullName evidence="5">Magnetosome protein MamF</fullName>
    </recommendedName>
</protein>
<reference key="1">
    <citation type="journal article" date="2005" name="DNA Res.">
        <title>Complete genome sequence of the facultative anaerobic magnetotactic bacterium Magnetospirillum sp. strain AMB-1.</title>
        <authorList>
            <person name="Matsunaga T."/>
            <person name="Okamura Y."/>
            <person name="Fukuda Y."/>
            <person name="Wahyudi A.T."/>
            <person name="Murase Y."/>
            <person name="Takeyama H."/>
        </authorList>
    </citation>
    <scope>NUCLEOTIDE SEQUENCE [LARGE SCALE GENOMIC DNA]</scope>
    <source>
        <strain>ATCC 700264 / AMB-1</strain>
    </source>
</reference>
<reference key="2">
    <citation type="journal article" date="2011" name="Mol. Microbiol.">
        <title>The HtrA/DegP family protease MamE is a bifunctional protein with roles in magnetosome protein localization and magnetite biomineralization.</title>
        <authorList>
            <person name="Quinlan A."/>
            <person name="Murat D."/>
            <person name="Vali H."/>
            <person name="Komeili A."/>
        </authorList>
    </citation>
    <scope>SUBCELLULAR LOCATION</scope>
    <source>
        <strain>ATCC 700264 / AMB-1</strain>
    </source>
</reference>
<reference key="3">
    <citation type="journal article" date="2012" name="Mol. Microbiol.">
        <title>The magnetosome membrane protein, MmsF, is a major regulator of magnetite biomineralization in Magnetospirillum magneticum AMB-1.</title>
        <authorList>
            <person name="Murat D."/>
            <person name="Falahati V."/>
            <person name="Bertinetti L."/>
            <person name="Csencsits R."/>
            <person name="Koernig A."/>
            <person name="Downing K."/>
            <person name="Faivre D."/>
            <person name="Komeili A."/>
        </authorList>
    </citation>
    <scope>DISRUPTION PHENOTYPE</scope>
    <source>
        <strain>ATCC 700264 / AMB-1</strain>
    </source>
</reference>
<accession>Q2W8R8</accession>
<name>MAMF_PARM1</name>
<evidence type="ECO:0000250" key="1">
    <source>
        <dbReference type="UniProtKB" id="Q6NE74"/>
    </source>
</evidence>
<evidence type="ECO:0000255" key="2"/>
<evidence type="ECO:0000269" key="3">
    <source>
    </source>
</evidence>
<evidence type="ECO:0000269" key="4">
    <source>
    </source>
</evidence>
<evidence type="ECO:0000305" key="5"/>
<feature type="chain" id="PRO_0000447796" description="Magnetosome protein MamF">
    <location>
        <begin position="1"/>
        <end position="111"/>
    </location>
</feature>
<feature type="topological domain" description="Cytoplasmic" evidence="5">
    <location>
        <begin position="1"/>
        <end position="17"/>
    </location>
</feature>
<feature type="transmembrane region" description="Helical" evidence="2">
    <location>
        <begin position="18"/>
        <end position="38"/>
    </location>
</feature>
<feature type="topological domain" description="Lumenal" evidence="5">
    <location>
        <begin position="39"/>
        <end position="50"/>
    </location>
</feature>
<feature type="transmembrane region" description="Helical" evidence="2">
    <location>
        <begin position="51"/>
        <end position="71"/>
    </location>
</feature>
<feature type="topological domain" description="Cytoplasmic" evidence="5">
    <location>
        <position position="72"/>
    </location>
</feature>
<feature type="transmembrane region" description="Helical" evidence="2">
    <location>
        <begin position="73"/>
        <end position="93"/>
    </location>
</feature>
<feature type="topological domain" description="Lumenal" evidence="5">
    <location>
        <begin position="94"/>
        <end position="111"/>
    </location>
</feature>